<evidence type="ECO:0000305" key="1"/>
<protein>
    <recommendedName>
        <fullName>Protein DfrA</fullName>
    </recommendedName>
</protein>
<accession>O52178</accession>
<proteinExistence type="inferred from homology"/>
<reference key="1">
    <citation type="submission" date="1997-09" db="EMBL/GenBank/DDBJ databases">
        <authorList>
            <person name="Harris B.Z."/>
            <person name="Kaiser D."/>
            <person name="Singer M.H."/>
        </authorList>
    </citation>
    <scope>NUCLEOTIDE SEQUENCE [GENOMIC DNA]</scope>
    <source>
        <strain>DK101</strain>
    </source>
</reference>
<gene>
    <name type="primary">dfrA</name>
</gene>
<dbReference type="EMBL" id="AF025847">
    <property type="protein sequence ID" value="AAB97678.1"/>
    <property type="molecule type" value="Genomic_DNA"/>
</dbReference>
<dbReference type="SMR" id="O52178"/>
<dbReference type="OMA" id="GSYFKEP"/>
<dbReference type="GO" id="GO:0005829">
    <property type="term" value="C:cytosol"/>
    <property type="evidence" value="ECO:0007669"/>
    <property type="project" value="TreeGrafter"/>
</dbReference>
<dbReference type="GO" id="GO:0019239">
    <property type="term" value="F:deaminase activity"/>
    <property type="evidence" value="ECO:0007669"/>
    <property type="project" value="TreeGrafter"/>
</dbReference>
<dbReference type="CDD" id="cd00448">
    <property type="entry name" value="YjgF_YER057c_UK114_family"/>
    <property type="match status" value="1"/>
</dbReference>
<dbReference type="FunFam" id="3.30.1330.40:FF:000001">
    <property type="entry name" value="L-PSP family endoribonuclease"/>
    <property type="match status" value="1"/>
</dbReference>
<dbReference type="Gene3D" id="3.30.1330.40">
    <property type="entry name" value="RutC-like"/>
    <property type="match status" value="1"/>
</dbReference>
<dbReference type="InterPro" id="IPR006056">
    <property type="entry name" value="RidA"/>
</dbReference>
<dbReference type="InterPro" id="IPR019897">
    <property type="entry name" value="RidA_CS"/>
</dbReference>
<dbReference type="InterPro" id="IPR035959">
    <property type="entry name" value="RutC-like_sf"/>
</dbReference>
<dbReference type="InterPro" id="IPR006175">
    <property type="entry name" value="YjgF/YER057c/UK114"/>
</dbReference>
<dbReference type="NCBIfam" id="TIGR00004">
    <property type="entry name" value="Rid family detoxifying hydrolase"/>
    <property type="match status" value="1"/>
</dbReference>
<dbReference type="PANTHER" id="PTHR11803">
    <property type="entry name" value="2-IMINOBUTANOATE/2-IMINOPROPANOATE DEAMINASE RIDA"/>
    <property type="match status" value="1"/>
</dbReference>
<dbReference type="PANTHER" id="PTHR11803:SF39">
    <property type="entry name" value="2-IMINOBUTANOATE_2-IMINOPROPANOATE DEAMINASE"/>
    <property type="match status" value="1"/>
</dbReference>
<dbReference type="Pfam" id="PF01042">
    <property type="entry name" value="Ribonuc_L-PSP"/>
    <property type="match status" value="1"/>
</dbReference>
<dbReference type="SUPFAM" id="SSF55298">
    <property type="entry name" value="YjgF-like"/>
    <property type="match status" value="1"/>
</dbReference>
<dbReference type="PROSITE" id="PS01094">
    <property type="entry name" value="UPF0076"/>
    <property type="match status" value="1"/>
</dbReference>
<name>DFRA_MYXXA</name>
<feature type="chain" id="PRO_0000170315" description="Protein DfrA">
    <location>
        <begin position="1"/>
        <end position="131"/>
    </location>
</feature>
<comment type="similarity">
    <text evidence="1">Belongs to the RutC family.</text>
</comment>
<organism>
    <name type="scientific">Myxococcus xanthus</name>
    <dbReference type="NCBI Taxonomy" id="34"/>
    <lineage>
        <taxon>Bacteria</taxon>
        <taxon>Pseudomonadati</taxon>
        <taxon>Myxococcota</taxon>
        <taxon>Myxococcia</taxon>
        <taxon>Myxococcales</taxon>
        <taxon>Cystobacterineae</taxon>
        <taxon>Myxococcaceae</taxon>
        <taxon>Myxococcus</taxon>
    </lineage>
</organism>
<sequence>MRRMARKAIHSDQAPKAIGPYSQAVQVDAGKMTFLSGQIPLDPATMEMVQGDVVAQAERVMENLKAVLAASGLDFSHVVRCTIFLTDLGDFARVNEVYGRYFTGAPPARATVQVSALPRGSKVEIDAIAVS</sequence>